<reference key="1">
    <citation type="journal article" date="2007" name="J. Bacteriol.">
        <title>Complete genome sequence of Haemophilus somnus (Histophilus somni) strain 129Pt and comparison to Haemophilus ducreyi 35000HP and Haemophilus influenzae Rd.</title>
        <authorList>
            <person name="Challacombe J.F."/>
            <person name="Duncan A.J."/>
            <person name="Brettin T.S."/>
            <person name="Bruce D."/>
            <person name="Chertkov O."/>
            <person name="Detter J.C."/>
            <person name="Han C.S."/>
            <person name="Misra M."/>
            <person name="Richardson P."/>
            <person name="Tapia R."/>
            <person name="Thayer N."/>
            <person name="Xie G."/>
            <person name="Inzana T.J."/>
        </authorList>
    </citation>
    <scope>NUCLEOTIDE SEQUENCE [LARGE SCALE GENOMIC DNA]</scope>
    <source>
        <strain>129Pt</strain>
    </source>
</reference>
<proteinExistence type="inferred from homology"/>
<feature type="chain" id="PRO_0000293288" description="Small ribosomal subunit protein uS4">
    <location>
        <begin position="1"/>
        <end position="206"/>
    </location>
</feature>
<feature type="domain" description="S4 RNA-binding" evidence="1">
    <location>
        <begin position="96"/>
        <end position="156"/>
    </location>
</feature>
<comment type="function">
    <text evidence="1">One of the primary rRNA binding proteins, it binds directly to 16S rRNA where it nucleates assembly of the body of the 30S subunit.</text>
</comment>
<comment type="function">
    <text evidence="1">With S5 and S12 plays an important role in translational accuracy.</text>
</comment>
<comment type="subunit">
    <text evidence="1">Part of the 30S ribosomal subunit. Contacts protein S5. The interaction surface between S4 and S5 is involved in control of translational fidelity.</text>
</comment>
<comment type="similarity">
    <text evidence="1">Belongs to the universal ribosomal protein uS4 family.</text>
</comment>
<accession>Q0I138</accession>
<sequence length="206" mass="23520">MARYLGPKLKLSRREGTDLFLKSGVRAIDTKCKIDTAPGQHGARKPRLSDYGSQLREKQKVRRIYGILERQFRNYYKEANRLKGNTGENLLVLLEGRLDNVVYRMGFAATRAEARQLVSHKAIVVNGRVVNIPSFQVSVNDVVAVREKSKKQARIKASLELAEQRERPTWLEVEAAKMEGVFKRVPERSDLSADINEHLIVELYSK</sequence>
<keyword id="KW-0687">Ribonucleoprotein</keyword>
<keyword id="KW-0689">Ribosomal protein</keyword>
<keyword id="KW-0694">RNA-binding</keyword>
<keyword id="KW-0699">rRNA-binding</keyword>
<gene>
    <name evidence="1" type="primary">rpsD</name>
    <name type="ordered locus">HS_0083</name>
</gene>
<dbReference type="EMBL" id="CP000436">
    <property type="protein sequence ID" value="ABI24364.1"/>
    <property type="molecule type" value="Genomic_DNA"/>
</dbReference>
<dbReference type="SMR" id="Q0I138"/>
<dbReference type="KEGG" id="hso:HS_0083"/>
<dbReference type="eggNOG" id="COG0522">
    <property type="taxonomic scope" value="Bacteria"/>
</dbReference>
<dbReference type="HOGENOM" id="CLU_092403_0_2_6"/>
<dbReference type="GO" id="GO:0015935">
    <property type="term" value="C:small ribosomal subunit"/>
    <property type="evidence" value="ECO:0007669"/>
    <property type="project" value="InterPro"/>
</dbReference>
<dbReference type="GO" id="GO:0019843">
    <property type="term" value="F:rRNA binding"/>
    <property type="evidence" value="ECO:0007669"/>
    <property type="project" value="UniProtKB-UniRule"/>
</dbReference>
<dbReference type="GO" id="GO:0003735">
    <property type="term" value="F:structural constituent of ribosome"/>
    <property type="evidence" value="ECO:0007669"/>
    <property type="project" value="InterPro"/>
</dbReference>
<dbReference type="GO" id="GO:0042274">
    <property type="term" value="P:ribosomal small subunit biogenesis"/>
    <property type="evidence" value="ECO:0007669"/>
    <property type="project" value="TreeGrafter"/>
</dbReference>
<dbReference type="GO" id="GO:0006412">
    <property type="term" value="P:translation"/>
    <property type="evidence" value="ECO:0007669"/>
    <property type="project" value="UniProtKB-UniRule"/>
</dbReference>
<dbReference type="CDD" id="cd00165">
    <property type="entry name" value="S4"/>
    <property type="match status" value="1"/>
</dbReference>
<dbReference type="FunFam" id="1.10.1050.10:FF:000001">
    <property type="entry name" value="30S ribosomal protein S4"/>
    <property type="match status" value="1"/>
</dbReference>
<dbReference type="FunFam" id="3.10.290.10:FF:000001">
    <property type="entry name" value="30S ribosomal protein S4"/>
    <property type="match status" value="1"/>
</dbReference>
<dbReference type="Gene3D" id="1.10.1050.10">
    <property type="entry name" value="Ribosomal Protein S4 Delta 41, Chain A, domain 1"/>
    <property type="match status" value="1"/>
</dbReference>
<dbReference type="Gene3D" id="3.10.290.10">
    <property type="entry name" value="RNA-binding S4 domain"/>
    <property type="match status" value="1"/>
</dbReference>
<dbReference type="HAMAP" id="MF_01306_B">
    <property type="entry name" value="Ribosomal_uS4_B"/>
    <property type="match status" value="1"/>
</dbReference>
<dbReference type="InterPro" id="IPR022801">
    <property type="entry name" value="Ribosomal_uS4"/>
</dbReference>
<dbReference type="InterPro" id="IPR005709">
    <property type="entry name" value="Ribosomal_uS4_bac-type"/>
</dbReference>
<dbReference type="InterPro" id="IPR018079">
    <property type="entry name" value="Ribosomal_uS4_CS"/>
</dbReference>
<dbReference type="InterPro" id="IPR001912">
    <property type="entry name" value="Ribosomal_uS4_N"/>
</dbReference>
<dbReference type="InterPro" id="IPR002942">
    <property type="entry name" value="S4_RNA-bd"/>
</dbReference>
<dbReference type="InterPro" id="IPR036986">
    <property type="entry name" value="S4_RNA-bd_sf"/>
</dbReference>
<dbReference type="NCBIfam" id="NF003717">
    <property type="entry name" value="PRK05327.1"/>
    <property type="match status" value="1"/>
</dbReference>
<dbReference type="NCBIfam" id="TIGR01017">
    <property type="entry name" value="rpsD_bact"/>
    <property type="match status" value="1"/>
</dbReference>
<dbReference type="PANTHER" id="PTHR11831">
    <property type="entry name" value="30S 40S RIBOSOMAL PROTEIN"/>
    <property type="match status" value="1"/>
</dbReference>
<dbReference type="PANTHER" id="PTHR11831:SF4">
    <property type="entry name" value="SMALL RIBOSOMAL SUBUNIT PROTEIN US4M"/>
    <property type="match status" value="1"/>
</dbReference>
<dbReference type="Pfam" id="PF00163">
    <property type="entry name" value="Ribosomal_S4"/>
    <property type="match status" value="1"/>
</dbReference>
<dbReference type="Pfam" id="PF01479">
    <property type="entry name" value="S4"/>
    <property type="match status" value="1"/>
</dbReference>
<dbReference type="SMART" id="SM01390">
    <property type="entry name" value="Ribosomal_S4"/>
    <property type="match status" value="1"/>
</dbReference>
<dbReference type="SMART" id="SM00363">
    <property type="entry name" value="S4"/>
    <property type="match status" value="1"/>
</dbReference>
<dbReference type="SUPFAM" id="SSF55174">
    <property type="entry name" value="Alpha-L RNA-binding motif"/>
    <property type="match status" value="1"/>
</dbReference>
<dbReference type="PROSITE" id="PS00632">
    <property type="entry name" value="RIBOSOMAL_S4"/>
    <property type="match status" value="1"/>
</dbReference>
<dbReference type="PROSITE" id="PS50889">
    <property type="entry name" value="S4"/>
    <property type="match status" value="1"/>
</dbReference>
<protein>
    <recommendedName>
        <fullName evidence="1">Small ribosomal subunit protein uS4</fullName>
    </recommendedName>
    <alternativeName>
        <fullName evidence="2">30S ribosomal protein S4</fullName>
    </alternativeName>
</protein>
<evidence type="ECO:0000255" key="1">
    <source>
        <dbReference type="HAMAP-Rule" id="MF_01306"/>
    </source>
</evidence>
<evidence type="ECO:0000305" key="2"/>
<name>RS4_HISS1</name>
<organism>
    <name type="scientific">Histophilus somni (strain 129Pt)</name>
    <name type="common">Haemophilus somnus</name>
    <dbReference type="NCBI Taxonomy" id="205914"/>
    <lineage>
        <taxon>Bacteria</taxon>
        <taxon>Pseudomonadati</taxon>
        <taxon>Pseudomonadota</taxon>
        <taxon>Gammaproteobacteria</taxon>
        <taxon>Pasteurellales</taxon>
        <taxon>Pasteurellaceae</taxon>
        <taxon>Histophilus</taxon>
    </lineage>
</organism>